<proteinExistence type="inferred from homology"/>
<accession>Q2ISE2</accession>
<protein>
    <recommendedName>
        <fullName evidence="1">DNA mismatch repair protein MutL</fullName>
    </recommendedName>
</protein>
<sequence length="597" mass="64429">MPVRQLPETIVNRIAAGEVVERPASVVKELVENAIDAGASRIDIFSDGGGRRKIVIADDGSGMTRADLALAVDRHATSKLDDEDLLQIRTLGFRGEALPSIGAVARLTITTRHAGEPHAWTLGVEGGDKSPIAPAALSQGTRVEVADLFFATPARLKFLKTDRTEAEAIRDVVRRLAMARPDIAFTLAGEERAPVTWAAALPGAPGQLIRLGDILGADFRANAIEVRSEREGVAVEGFAASPALTRANALGQYLFVNGRPVRDKLILGAVRAAYSDYLPRDRHPVVALFVTLESREVDANVHPAKTEVRFRNAGLVRALIVHALKEGLAREGRRTAANSAGSVISTFRPASMPAANWDWRASPSYPVGGSAIDAPSFAERPQAAFDVGGPSADIRTHEVAPDLLDRPLGAARTQIHETYIVSQTRDGLIVVDQHAAHERIVYERLKASLAANGVQRQILLIPDIVEMDEATVERLVARADELAQFGLVVESFGPGAVAVRETPSLLGKTDAASLLRDLAEHMAEWDEALPLERRLMHVAATMACHGSVRAGRVLKPEEMNALLREMEATPNSGQCNHGRPTYVELTLTDIEKLFGRR</sequence>
<evidence type="ECO:0000255" key="1">
    <source>
        <dbReference type="HAMAP-Rule" id="MF_00149"/>
    </source>
</evidence>
<name>MUTL_RHOP2</name>
<keyword id="KW-0227">DNA damage</keyword>
<keyword id="KW-0234">DNA repair</keyword>
<keyword id="KW-1185">Reference proteome</keyword>
<feature type="chain" id="PRO_1000010062" description="DNA mismatch repair protein MutL">
    <location>
        <begin position="1"/>
        <end position="597"/>
    </location>
</feature>
<comment type="function">
    <text evidence="1">This protein is involved in the repair of mismatches in DNA. It is required for dam-dependent methyl-directed DNA mismatch repair. May act as a 'molecular matchmaker', a protein that promotes the formation of a stable complex between two or more DNA-binding proteins in an ATP-dependent manner without itself being part of a final effector complex.</text>
</comment>
<comment type="similarity">
    <text evidence="1">Belongs to the DNA mismatch repair MutL/HexB family.</text>
</comment>
<gene>
    <name evidence="1" type="primary">mutL</name>
    <name type="ordered locus">RPB_4176</name>
</gene>
<dbReference type="EMBL" id="CP000250">
    <property type="protein sequence ID" value="ABD08868.1"/>
    <property type="molecule type" value="Genomic_DNA"/>
</dbReference>
<dbReference type="RefSeq" id="WP_011443052.1">
    <property type="nucleotide sequence ID" value="NC_007778.1"/>
</dbReference>
<dbReference type="SMR" id="Q2ISE2"/>
<dbReference type="STRING" id="316058.RPB_4176"/>
<dbReference type="KEGG" id="rpb:RPB_4176"/>
<dbReference type="eggNOG" id="COG0323">
    <property type="taxonomic scope" value="Bacteria"/>
</dbReference>
<dbReference type="HOGENOM" id="CLU_004131_4_2_5"/>
<dbReference type="OrthoDB" id="9763467at2"/>
<dbReference type="Proteomes" id="UP000008809">
    <property type="component" value="Chromosome"/>
</dbReference>
<dbReference type="GO" id="GO:0032300">
    <property type="term" value="C:mismatch repair complex"/>
    <property type="evidence" value="ECO:0007669"/>
    <property type="project" value="InterPro"/>
</dbReference>
<dbReference type="GO" id="GO:0005524">
    <property type="term" value="F:ATP binding"/>
    <property type="evidence" value="ECO:0007669"/>
    <property type="project" value="InterPro"/>
</dbReference>
<dbReference type="GO" id="GO:0016887">
    <property type="term" value="F:ATP hydrolysis activity"/>
    <property type="evidence" value="ECO:0007669"/>
    <property type="project" value="InterPro"/>
</dbReference>
<dbReference type="GO" id="GO:0140664">
    <property type="term" value="F:ATP-dependent DNA damage sensor activity"/>
    <property type="evidence" value="ECO:0007669"/>
    <property type="project" value="InterPro"/>
</dbReference>
<dbReference type="GO" id="GO:0030983">
    <property type="term" value="F:mismatched DNA binding"/>
    <property type="evidence" value="ECO:0007669"/>
    <property type="project" value="InterPro"/>
</dbReference>
<dbReference type="GO" id="GO:0006298">
    <property type="term" value="P:mismatch repair"/>
    <property type="evidence" value="ECO:0007669"/>
    <property type="project" value="UniProtKB-UniRule"/>
</dbReference>
<dbReference type="CDD" id="cd16926">
    <property type="entry name" value="HATPase_MutL-MLH-PMS-like"/>
    <property type="match status" value="1"/>
</dbReference>
<dbReference type="CDD" id="cd00782">
    <property type="entry name" value="MutL_Trans"/>
    <property type="match status" value="1"/>
</dbReference>
<dbReference type="FunFam" id="3.30.565.10:FF:000003">
    <property type="entry name" value="DNA mismatch repair endonuclease MutL"/>
    <property type="match status" value="1"/>
</dbReference>
<dbReference type="Gene3D" id="3.30.230.10">
    <property type="match status" value="1"/>
</dbReference>
<dbReference type="Gene3D" id="3.30.565.10">
    <property type="entry name" value="Histidine kinase-like ATPase, C-terminal domain"/>
    <property type="match status" value="1"/>
</dbReference>
<dbReference type="Gene3D" id="3.30.1540.20">
    <property type="entry name" value="MutL, C-terminal domain, dimerisation subdomain"/>
    <property type="match status" value="1"/>
</dbReference>
<dbReference type="Gene3D" id="3.30.1370.100">
    <property type="entry name" value="MutL, C-terminal domain, regulatory subdomain"/>
    <property type="match status" value="1"/>
</dbReference>
<dbReference type="HAMAP" id="MF_00149">
    <property type="entry name" value="DNA_mis_repair"/>
    <property type="match status" value="1"/>
</dbReference>
<dbReference type="InterPro" id="IPR014762">
    <property type="entry name" value="DNA_mismatch_repair_CS"/>
</dbReference>
<dbReference type="InterPro" id="IPR020667">
    <property type="entry name" value="DNA_mismatch_repair_MutL"/>
</dbReference>
<dbReference type="InterPro" id="IPR013507">
    <property type="entry name" value="DNA_mismatch_S5_2-like"/>
</dbReference>
<dbReference type="InterPro" id="IPR036890">
    <property type="entry name" value="HATPase_C_sf"/>
</dbReference>
<dbReference type="InterPro" id="IPR002099">
    <property type="entry name" value="MutL/Mlh/PMS"/>
</dbReference>
<dbReference type="InterPro" id="IPR038973">
    <property type="entry name" value="MutL/Mlh/Pms-like"/>
</dbReference>
<dbReference type="InterPro" id="IPR014790">
    <property type="entry name" value="MutL_C"/>
</dbReference>
<dbReference type="InterPro" id="IPR042120">
    <property type="entry name" value="MutL_C_dimsub"/>
</dbReference>
<dbReference type="InterPro" id="IPR042121">
    <property type="entry name" value="MutL_C_regsub"/>
</dbReference>
<dbReference type="InterPro" id="IPR037198">
    <property type="entry name" value="MutL_C_sf"/>
</dbReference>
<dbReference type="InterPro" id="IPR020568">
    <property type="entry name" value="Ribosomal_Su5_D2-typ_SF"/>
</dbReference>
<dbReference type="InterPro" id="IPR014721">
    <property type="entry name" value="Ribsml_uS5_D2-typ_fold_subgr"/>
</dbReference>
<dbReference type="NCBIfam" id="TIGR00585">
    <property type="entry name" value="mutl"/>
    <property type="match status" value="1"/>
</dbReference>
<dbReference type="NCBIfam" id="NF000953">
    <property type="entry name" value="PRK00095.2-4"/>
    <property type="match status" value="1"/>
</dbReference>
<dbReference type="PANTHER" id="PTHR10073">
    <property type="entry name" value="DNA MISMATCH REPAIR PROTEIN MLH, PMS, MUTL"/>
    <property type="match status" value="1"/>
</dbReference>
<dbReference type="PANTHER" id="PTHR10073:SF12">
    <property type="entry name" value="DNA MISMATCH REPAIR PROTEIN MLH1"/>
    <property type="match status" value="1"/>
</dbReference>
<dbReference type="Pfam" id="PF01119">
    <property type="entry name" value="DNA_mis_repair"/>
    <property type="match status" value="1"/>
</dbReference>
<dbReference type="Pfam" id="PF13589">
    <property type="entry name" value="HATPase_c_3"/>
    <property type="match status" value="1"/>
</dbReference>
<dbReference type="Pfam" id="PF08676">
    <property type="entry name" value="MutL_C"/>
    <property type="match status" value="1"/>
</dbReference>
<dbReference type="SMART" id="SM01340">
    <property type="entry name" value="DNA_mis_repair"/>
    <property type="match status" value="1"/>
</dbReference>
<dbReference type="SMART" id="SM00853">
    <property type="entry name" value="MutL_C"/>
    <property type="match status" value="1"/>
</dbReference>
<dbReference type="SUPFAM" id="SSF55874">
    <property type="entry name" value="ATPase domain of HSP90 chaperone/DNA topoisomerase II/histidine kinase"/>
    <property type="match status" value="1"/>
</dbReference>
<dbReference type="SUPFAM" id="SSF118116">
    <property type="entry name" value="DNA mismatch repair protein MutL"/>
    <property type="match status" value="1"/>
</dbReference>
<dbReference type="SUPFAM" id="SSF54211">
    <property type="entry name" value="Ribosomal protein S5 domain 2-like"/>
    <property type="match status" value="1"/>
</dbReference>
<dbReference type="PROSITE" id="PS00058">
    <property type="entry name" value="DNA_MISMATCH_REPAIR_1"/>
    <property type="match status" value="1"/>
</dbReference>
<reference key="1">
    <citation type="submission" date="2006-01" db="EMBL/GenBank/DDBJ databases">
        <title>Complete sequence of Rhodopseudomonas palustris HaA2.</title>
        <authorList>
            <consortium name="US DOE Joint Genome Institute"/>
            <person name="Copeland A."/>
            <person name="Lucas S."/>
            <person name="Lapidus A."/>
            <person name="Barry K."/>
            <person name="Detter J.C."/>
            <person name="Glavina T."/>
            <person name="Hammon N."/>
            <person name="Israni S."/>
            <person name="Pitluck S."/>
            <person name="Chain P."/>
            <person name="Malfatti S."/>
            <person name="Shin M."/>
            <person name="Vergez L."/>
            <person name="Schmutz J."/>
            <person name="Larimer F."/>
            <person name="Land M."/>
            <person name="Hauser L."/>
            <person name="Pelletier D.A."/>
            <person name="Kyrpides N."/>
            <person name="Anderson I."/>
            <person name="Oda Y."/>
            <person name="Harwood C.S."/>
            <person name="Richardson P."/>
        </authorList>
    </citation>
    <scope>NUCLEOTIDE SEQUENCE [LARGE SCALE GENOMIC DNA]</scope>
    <source>
        <strain>HaA2</strain>
    </source>
</reference>
<organism>
    <name type="scientific">Rhodopseudomonas palustris (strain HaA2)</name>
    <dbReference type="NCBI Taxonomy" id="316058"/>
    <lineage>
        <taxon>Bacteria</taxon>
        <taxon>Pseudomonadati</taxon>
        <taxon>Pseudomonadota</taxon>
        <taxon>Alphaproteobacteria</taxon>
        <taxon>Hyphomicrobiales</taxon>
        <taxon>Nitrobacteraceae</taxon>
        <taxon>Rhodopseudomonas</taxon>
    </lineage>
</organism>